<evidence type="ECO:0000250" key="1"/>
<evidence type="ECO:0000250" key="2">
    <source>
        <dbReference type="UniProtKB" id="O43847"/>
    </source>
</evidence>
<evidence type="ECO:0000250" key="3">
    <source>
        <dbReference type="UniProtKB" id="Q8BHG1"/>
    </source>
</evidence>
<evidence type="ECO:0000255" key="4"/>
<evidence type="ECO:0000255" key="5">
    <source>
        <dbReference type="PROSITE-ProRule" id="PRU10096"/>
    </source>
</evidence>
<evidence type="ECO:0000256" key="6">
    <source>
        <dbReference type="SAM" id="MobiDB-lite"/>
    </source>
</evidence>
<evidence type="ECO:0000303" key="7">
    <source>
    </source>
</evidence>
<evidence type="ECO:0000305" key="8"/>
<evidence type="ECO:0007744" key="9">
    <source>
    </source>
</evidence>
<gene>
    <name evidence="2" type="primary">Nrdc</name>
    <name type="synonym">Nrd1</name>
</gene>
<dbReference type="EC" id="3.4.24.61"/>
<dbReference type="EMBL" id="L27124">
    <property type="protein sequence ID" value="AAA21818.1"/>
    <property type="molecule type" value="mRNA"/>
</dbReference>
<dbReference type="EMBL" id="X93208">
    <property type="protein sequence ID" value="CAA63696.1"/>
    <property type="molecule type" value="mRNA"/>
</dbReference>
<dbReference type="PIR" id="I59311">
    <property type="entry name" value="I59311"/>
</dbReference>
<dbReference type="RefSeq" id="NP_037125.1">
    <molecule id="P47245-1"/>
    <property type="nucleotide sequence ID" value="NM_012993.2"/>
</dbReference>
<dbReference type="SMR" id="P47245"/>
<dbReference type="BioGRID" id="247532">
    <property type="interactions" value="3"/>
</dbReference>
<dbReference type="FunCoup" id="P47245">
    <property type="interactions" value="2088"/>
</dbReference>
<dbReference type="STRING" id="10116.ENSRNOP00000010462"/>
<dbReference type="MEROPS" id="M16.005"/>
<dbReference type="iPTMnet" id="P47245"/>
<dbReference type="PhosphoSitePlus" id="P47245"/>
<dbReference type="jPOST" id="P47245"/>
<dbReference type="PaxDb" id="10116-ENSRNOP00000010462"/>
<dbReference type="GeneID" id="25499"/>
<dbReference type="KEGG" id="rno:25499"/>
<dbReference type="UCSC" id="RGD:3210">
    <molecule id="P47245-1"/>
    <property type="organism name" value="rat"/>
</dbReference>
<dbReference type="AGR" id="RGD:3210"/>
<dbReference type="CTD" id="4898"/>
<dbReference type="RGD" id="3210">
    <property type="gene designation" value="Nrdc"/>
</dbReference>
<dbReference type="eggNOG" id="KOG0959">
    <property type="taxonomic scope" value="Eukaryota"/>
</dbReference>
<dbReference type="InParanoid" id="P47245"/>
<dbReference type="OrthoDB" id="4953at2759"/>
<dbReference type="PhylomeDB" id="P47245"/>
<dbReference type="PRO" id="PR:P47245"/>
<dbReference type="Proteomes" id="UP000002494">
    <property type="component" value="Unplaced"/>
</dbReference>
<dbReference type="GO" id="GO:0030425">
    <property type="term" value="C:dendrite"/>
    <property type="evidence" value="ECO:0007669"/>
    <property type="project" value="UniProtKB-SubCell"/>
</dbReference>
<dbReference type="GO" id="GO:0005759">
    <property type="term" value="C:mitochondrial matrix"/>
    <property type="evidence" value="ECO:0000266"/>
    <property type="project" value="RGD"/>
</dbReference>
<dbReference type="GO" id="GO:0046872">
    <property type="term" value="F:metal ion binding"/>
    <property type="evidence" value="ECO:0007669"/>
    <property type="project" value="UniProtKB-KW"/>
</dbReference>
<dbReference type="GO" id="GO:0004222">
    <property type="term" value="F:metalloendopeptidase activity"/>
    <property type="evidence" value="ECO:0007669"/>
    <property type="project" value="UniProtKB-EC"/>
</dbReference>
<dbReference type="GO" id="GO:0008233">
    <property type="term" value="F:peptidase activity"/>
    <property type="evidence" value="ECO:0000314"/>
    <property type="project" value="MGI"/>
</dbReference>
<dbReference type="GO" id="GO:0120163">
    <property type="term" value="P:negative regulation of cold-induced thermogenesis"/>
    <property type="evidence" value="ECO:0000250"/>
    <property type="project" value="YuBioLab"/>
</dbReference>
<dbReference type="GO" id="GO:0050772">
    <property type="term" value="P:positive regulation of axonogenesis"/>
    <property type="evidence" value="ECO:0000250"/>
    <property type="project" value="UniProtKB"/>
</dbReference>
<dbReference type="GO" id="GO:0051044">
    <property type="term" value="P:positive regulation of membrane protein ectodomain proteolysis"/>
    <property type="evidence" value="ECO:0000250"/>
    <property type="project" value="UniProtKB"/>
</dbReference>
<dbReference type="GO" id="GO:0031643">
    <property type="term" value="P:positive regulation of myelination"/>
    <property type="evidence" value="ECO:0000250"/>
    <property type="project" value="UniProtKB"/>
</dbReference>
<dbReference type="GO" id="GO:0006508">
    <property type="term" value="P:proteolysis"/>
    <property type="evidence" value="ECO:0007669"/>
    <property type="project" value="UniProtKB-KW"/>
</dbReference>
<dbReference type="FunFam" id="3.30.830.10:FF:000005">
    <property type="entry name" value="nardilysin isoform X1"/>
    <property type="match status" value="1"/>
</dbReference>
<dbReference type="FunFam" id="3.30.830.10:FF:000019">
    <property type="entry name" value="nardilysin isoform X1"/>
    <property type="match status" value="1"/>
</dbReference>
<dbReference type="Gene3D" id="3.30.830.10">
    <property type="entry name" value="Metalloenzyme, LuxS/M16 peptidase-like"/>
    <property type="match status" value="4"/>
</dbReference>
<dbReference type="InterPro" id="IPR011249">
    <property type="entry name" value="Metalloenz_LuxS/M16"/>
</dbReference>
<dbReference type="InterPro" id="IPR011765">
    <property type="entry name" value="Pept_M16_N"/>
</dbReference>
<dbReference type="InterPro" id="IPR001431">
    <property type="entry name" value="Pept_M16_Zn_BS"/>
</dbReference>
<dbReference type="InterPro" id="IPR050626">
    <property type="entry name" value="Peptidase_M16"/>
</dbReference>
<dbReference type="InterPro" id="IPR007863">
    <property type="entry name" value="Peptidase_M16_C"/>
</dbReference>
<dbReference type="InterPro" id="IPR032632">
    <property type="entry name" value="Peptidase_M16_M"/>
</dbReference>
<dbReference type="PANTHER" id="PTHR43690:SF18">
    <property type="entry name" value="INSULIN-DEGRADING ENZYME-RELATED"/>
    <property type="match status" value="1"/>
</dbReference>
<dbReference type="PANTHER" id="PTHR43690">
    <property type="entry name" value="NARDILYSIN"/>
    <property type="match status" value="1"/>
</dbReference>
<dbReference type="Pfam" id="PF00675">
    <property type="entry name" value="Peptidase_M16"/>
    <property type="match status" value="1"/>
</dbReference>
<dbReference type="Pfam" id="PF05193">
    <property type="entry name" value="Peptidase_M16_C"/>
    <property type="match status" value="2"/>
</dbReference>
<dbReference type="Pfam" id="PF16187">
    <property type="entry name" value="Peptidase_M16_M"/>
    <property type="match status" value="1"/>
</dbReference>
<dbReference type="SUPFAM" id="SSF63411">
    <property type="entry name" value="LuxS/MPP-like metallohydrolase"/>
    <property type="match status" value="4"/>
</dbReference>
<dbReference type="PROSITE" id="PS00143">
    <property type="entry name" value="INSULINASE"/>
    <property type="match status" value="1"/>
</dbReference>
<reference key="1">
    <citation type="journal article" date="1994" name="Proc. Natl. Acad. Sci. U.S.A.">
        <title>N-arginine dibasic convertase, a metalloendopeptidase as a prototype of a class of processing enzymes.</title>
        <authorList>
            <person name="Pierotti A.R."/>
            <person name="Prat A."/>
            <person name="Chesneau V."/>
            <person name="Gaudoux F."/>
            <person name="Leseney A.-M."/>
            <person name="Foulon T."/>
            <person name="Cohen P."/>
        </authorList>
    </citation>
    <scope>NUCLEOTIDE SEQUENCE [MRNA] (ISOFORM 1)</scope>
    <source>
        <tissue>Testis</tissue>
    </source>
</reference>
<reference key="2">
    <citation type="journal article" date="1997" name="Biochem. J.">
        <title>Human and rat testis express two mRNA species encoding variants of NRD convertase, a metalloendopeptidase of the insulinase family.</title>
        <authorList>
            <person name="Hospital V."/>
            <person name="Prat A."/>
            <person name="Joulie C."/>
            <person name="Cherif D."/>
            <person name="Day R."/>
            <person name="Cohen P."/>
        </authorList>
    </citation>
    <scope>NUCLEOTIDE SEQUENCE [MRNA] (ISOFORM 2)</scope>
    <source>
        <tissue>Testis</tissue>
    </source>
</reference>
<reference key="3">
    <citation type="journal article" date="1994" name="Biochimie">
        <title>N-arginine dibasic convertase (NRD convertase): a newcomer to the family of processing endopeptidases. An overview.</title>
        <authorList>
            <person name="Chesneau V."/>
            <person name="Pierotti A.R."/>
            <person name="Prat A."/>
            <person name="Gaudoux F."/>
            <person name="Foulon T."/>
            <person name="Cohen P."/>
        </authorList>
    </citation>
    <scope>DISCUSSION OF SEQUENCE</scope>
</reference>
<reference key="4">
    <citation type="journal article" date="2012" name="Nat. Commun.">
        <title>Quantitative maps of protein phosphorylation sites across 14 different rat organs and tissues.</title>
        <authorList>
            <person name="Lundby A."/>
            <person name="Secher A."/>
            <person name="Lage K."/>
            <person name="Nordsborg N.B."/>
            <person name="Dmytriyev A."/>
            <person name="Lundby C."/>
            <person name="Olsen J.V."/>
        </authorList>
    </citation>
    <scope>PHOSPHORYLATION [LARGE SCALE ANALYSIS] AT SER-85 AND SER-91</scope>
    <scope>IDENTIFICATION BY MASS SPECTROMETRY [LARGE SCALE ANALYSIS]</scope>
</reference>
<protein>
    <recommendedName>
        <fullName>Nardilysin</fullName>
        <ecNumber>3.4.24.61</ecNumber>
    </recommendedName>
    <alternativeName>
        <fullName>N-arginine dibasic convertase</fullName>
        <shortName>NRD convertase</shortName>
        <shortName>NRD-C</shortName>
    </alternativeName>
    <alternativeName>
        <fullName evidence="2">Nardilysin convertase</fullName>
    </alternativeName>
</protein>
<accession>P47245</accession>
<accession>O35836</accession>
<keyword id="KW-0025">Alternative splicing</keyword>
<keyword id="KW-0966">Cell projection</keyword>
<keyword id="KW-0378">Hydrolase</keyword>
<keyword id="KW-0479">Metal-binding</keyword>
<keyword id="KW-0482">Metalloprotease</keyword>
<keyword id="KW-0496">Mitochondrion</keyword>
<keyword id="KW-0597">Phosphoprotein</keyword>
<keyword id="KW-0645">Protease</keyword>
<keyword id="KW-1185">Reference proteome</keyword>
<keyword id="KW-0732">Signal</keyword>
<keyword id="KW-0862">Zinc</keyword>
<proteinExistence type="evidence at protein level"/>
<name>NRDC_RAT</name>
<organism>
    <name type="scientific">Rattus norvegicus</name>
    <name type="common">Rat</name>
    <dbReference type="NCBI Taxonomy" id="10116"/>
    <lineage>
        <taxon>Eukaryota</taxon>
        <taxon>Metazoa</taxon>
        <taxon>Chordata</taxon>
        <taxon>Craniata</taxon>
        <taxon>Vertebrata</taxon>
        <taxon>Euteleostomi</taxon>
        <taxon>Mammalia</taxon>
        <taxon>Eutheria</taxon>
        <taxon>Euarchontoglires</taxon>
        <taxon>Glires</taxon>
        <taxon>Rodentia</taxon>
        <taxon>Myomorpha</taxon>
        <taxon>Muroidea</taxon>
        <taxon>Muridae</taxon>
        <taxon>Murinae</taxon>
        <taxon>Rattus</taxon>
    </lineage>
</organism>
<sequence>MLRRVAVAAVFATGRKLRCEAGRDVTAVGRIEARGLCEESAKPFPTLTMPGRNKAKSTCSCPDLQPNGQDLGESGRVARLGADESEEEGRSLSNVGDPEIIKSPSDPKQYRYIKLQNGLQALLISDLSNVEGKTGNATDEEEEEEEEEEEGEEEEEEEEDDDDDDDEDSGAEIQDDDEEGFDDEEEFDDDEHDDDDLDNEENELEELEERVEARKKTTEKQSAAALCVGVGSFADPDDLPGLAHFLEHMVFMGSLKYPDENGFDAFLKKHGGSDNASTDCERTVFQFDVQRKYFKEALDRWAQFFIHPLMIRDAIDREVEAVDSEYQLARPSDANRKEMLFGSLARPGHPMGKFFWGNAETLKHEPKKNNIDTHARLREFWMRYYSAHYMTLVVQSKETLDTLEKWVTEIFSQIPNNGLPKPNFSHLTDPFDTPAFNKLYRVVPIRKIHALTITWALPPQQQHYRVKPLHYISWLVGHEGKGSILSYLRKKCWALALFGGNGETGFEQNSTYSVFSISITLTDEGYEHFYEVAHTVFQYLKMLQKLGPEKRVFEEIQKIEDNEFHYQEQTDPVEYVENMCENMQLYPRQDFLTGDQLLFEYKPEVIAEALNQLVPQKANLVLLSGANEGRCDLKEKWFGTQYSIEDIENSWTELWKSNFDLNSDLHLPAENKYIATDFTLKAFDCPETEYPAKIVNTPQGCLWYKKDNKFKIPKAYIRFHLISPLIQKSAANVVLFDIFVNILTHNLAEPAYEADVAQLEYKLVAGEHGLIIRVKGFNHKLPLLFQLIIDYLTEFSSTPAVFTMITEQLKKTYFNILIKPETLAKDVRLLILEYSRWSMIDKYRALMDGLSLESLLNFVKDFKSQLFVEGLVQGNVTSTESMDFLRYVVDKLNFVPLEREMPVQFQVVELPSGHHLCKVRALNKGDANSEVTVYYQSGTRSLREYTLMELLVMHMEEPCFDFLRTKQTLGYHVYPTCRNTSGILGFSVTVGTQATKYNSETVDKKIEEFLSSFEEKIENLTEDAFNTQVTALIKLKECEDTHLGEEVDRNWNEVVTQQYLFDRLAHEIEALKSFSKSDLVSWFKAHRGPGSKMLSVHVVGYGKYELEEDGAPVCEDPNSREGMQLIYLPPSPLLAESTTPITDIRAFTATLSLFPYHKIVK</sequence>
<feature type="signal peptide" evidence="4">
    <location>
        <begin position="1"/>
        <end position="18"/>
    </location>
</feature>
<feature type="chain" id="PRO_0000026757" description="Nardilysin">
    <location>
        <begin position="19"/>
        <end position="1161"/>
    </location>
</feature>
<feature type="region of interest" description="Disordered" evidence="6">
    <location>
        <begin position="42"/>
        <end position="105"/>
    </location>
</feature>
<feature type="region of interest" description="Disordered" evidence="6">
    <location>
        <begin position="130"/>
        <end position="218"/>
    </location>
</feature>
<feature type="compositionally biased region" description="Acidic residues" evidence="6">
    <location>
        <begin position="138"/>
        <end position="209"/>
    </location>
</feature>
<feature type="active site" description="Proton acceptor" evidence="5">
    <location>
        <position position="247"/>
    </location>
</feature>
<feature type="binding site" evidence="5">
    <location>
        <position position="244"/>
    </location>
    <ligand>
        <name>Zn(2+)</name>
        <dbReference type="ChEBI" id="CHEBI:29105"/>
    </ligand>
</feature>
<feature type="binding site" evidence="5">
    <location>
        <position position="248"/>
    </location>
    <ligand>
        <name>Zn(2+)</name>
        <dbReference type="ChEBI" id="CHEBI:29105"/>
    </ligand>
</feature>
<feature type="binding site" evidence="5">
    <location>
        <position position="325"/>
    </location>
    <ligand>
        <name>Zn(2+)</name>
        <dbReference type="ChEBI" id="CHEBI:29105"/>
    </ligand>
</feature>
<feature type="modified residue" description="Phosphoserine" evidence="9">
    <location>
        <position position="85"/>
    </location>
</feature>
<feature type="modified residue" description="Phosphoserine" evidence="9">
    <location>
        <position position="91"/>
    </location>
</feature>
<feature type="modified residue" description="Phosphoserine" evidence="2">
    <location>
        <position position="93"/>
    </location>
</feature>
<feature type="splice variant" id="VSP_007115" description="In isoform 2." evidence="7">
    <original>Q</original>
    <variation>QQSQNLFLLWSKLTDRLWFKSSYSKMSSTLLVETRNLYGVVGAESRSAPVEHLAGWQVEEQQGETDTVL</variation>
    <location>
        <position position="221"/>
    </location>
</feature>
<comment type="function">
    <text evidence="3">Cleaves peptide substrates on the N-terminus of arginine residues in dibasic pairs. Is a critical activator of BACE1- and ADAM17-mediated pro-neuregulin ectodomain shedding, involved in the positive regulation of axonal maturation and myelination. Required for proper functioning of 2-oxoglutarate dehydrogenase (OGDH) (By similarity).</text>
</comment>
<comment type="catalytic activity">
    <reaction>
        <text>Hydrolysis of polypeptides, preferably at -Xaa-|-Arg-Lys-, and less commonly at -Arg-|-Arg-Xaa-, in which Xaa is not Arg or Lys.</text>
        <dbReference type="EC" id="3.4.24.61"/>
    </reaction>
</comment>
<comment type="cofactor">
    <cofactor evidence="1">
        <name>Zn(2+)</name>
        <dbReference type="ChEBI" id="CHEBI:29105"/>
    </cofactor>
    <text evidence="1">Binds 1 zinc ion per subunit.</text>
</comment>
<comment type="subunit">
    <text evidence="3">Interacts with BACE1 and NRG1.</text>
</comment>
<comment type="subcellular location">
    <subcellularLocation>
        <location evidence="2">Mitochondrion</location>
    </subcellularLocation>
    <subcellularLocation>
        <location evidence="3">Cell projection</location>
        <location evidence="3">Dendrite</location>
    </subcellularLocation>
</comment>
<comment type="alternative products">
    <event type="alternative splicing"/>
    <isoform>
        <id>P47245-1</id>
        <name>1</name>
        <name>NRD1</name>
        <sequence type="displayed"/>
    </isoform>
    <isoform>
        <id>P47245-2</id>
        <name>2</name>
        <name>NRD2</name>
        <sequence type="described" ref="VSP_007115"/>
    </isoform>
</comment>
<comment type="tissue specificity">
    <text>Testis, and in a lower level in brain, heart and adrenal glands.</text>
</comment>
<comment type="similarity">
    <text evidence="8">Belongs to the peptidase M16 family.</text>
</comment>